<name>CSN5_ORYSJ</name>
<comment type="function">
    <text evidence="1 9">Probable protease subunit of the COP9 signalosome complex (CSN), a complex involved in various cellular and developmental processes such as photomorphogenesis and response to hormones (By similarity). The CSN complex is an essential regulator of the ubiquitin (Ubl) conjugation pathway by mediating the deneddylation of the cullin subunits of SCF-type E3 ligase complexes, leading to decrease the Ubl ligase activity of SCF (By similarity). Involved in early response to iron deficiency (Probable).</text>
</comment>
<comment type="subunit">
    <text evidence="2 5">Component of the CSN complex, probably composed of CSN1, CSN2, CSN3, CSN4, CSN5, CSN6, CSN7 and CSN8 (By similarity). Interacts with MCM2 (PubMed:18755073).</text>
</comment>
<comment type="induction">
    <text evidence="6">Down-regulated during the early stage of iron deficiency (at protein level).</text>
</comment>
<comment type="similarity">
    <text evidence="8">Belongs to the peptidase M67A family. CSN5 subfamily.</text>
</comment>
<protein>
    <recommendedName>
        <fullName evidence="7">COP9 signalosome complex subunit 5</fullName>
        <shortName evidence="7">OsCSN5</shortName>
    </recommendedName>
    <alternativeName>
        <fullName evidence="10">JUN-activation-domain-binding protein 1</fullName>
    </alternativeName>
    <alternativeName>
        <fullName evidence="8">Signalosome subunit 6</fullName>
    </alternativeName>
</protein>
<evidence type="ECO:0000250" key="1">
    <source>
        <dbReference type="UniProtKB" id="Q6ZKM2"/>
    </source>
</evidence>
<evidence type="ECO:0000250" key="2">
    <source>
        <dbReference type="UniProtKB" id="Q8LAZ7"/>
    </source>
</evidence>
<evidence type="ECO:0000255" key="3">
    <source>
        <dbReference type="PROSITE-ProRule" id="PRU01182"/>
    </source>
</evidence>
<evidence type="ECO:0000256" key="4">
    <source>
        <dbReference type="SAM" id="MobiDB-lite"/>
    </source>
</evidence>
<evidence type="ECO:0000269" key="5">
    <source>
    </source>
</evidence>
<evidence type="ECO:0000269" key="6">
    <source>
    </source>
</evidence>
<evidence type="ECO:0000303" key="7">
    <source>
    </source>
</evidence>
<evidence type="ECO:0000305" key="8"/>
<evidence type="ECO:0000305" key="9">
    <source>
    </source>
</evidence>
<evidence type="ECO:0000312" key="10">
    <source>
        <dbReference type="EMBL" id="BAC22747.1"/>
    </source>
</evidence>
<evidence type="ECO:0000312" key="11">
    <source>
        <dbReference type="EMBL" id="BAF16026.1"/>
    </source>
</evidence>
<evidence type="ECO:0000312" key="12">
    <source>
        <dbReference type="EMBL" id="CAE01552.2"/>
    </source>
</evidence>
<keyword id="KW-0217">Developmental protein</keyword>
<keyword id="KW-0378">Hydrolase</keyword>
<keyword id="KW-0479">Metal-binding</keyword>
<keyword id="KW-0482">Metalloprotease</keyword>
<keyword id="KW-0645">Protease</keyword>
<keyword id="KW-1185">Reference proteome</keyword>
<keyword id="KW-0736">Signalosome</keyword>
<keyword id="KW-0862">Zinc</keyword>
<gene>
    <name evidence="7" type="primary">CSN5</name>
    <name evidence="10" type="synonym">JAB1</name>
    <name evidence="11" type="ordered locus">Os04g0654700</name>
    <name evidence="12" type="ORF">OSJNBb0022F16.7</name>
</gene>
<organism>
    <name type="scientific">Oryza sativa subsp. japonica</name>
    <name type="common">Rice</name>
    <dbReference type="NCBI Taxonomy" id="39947"/>
    <lineage>
        <taxon>Eukaryota</taxon>
        <taxon>Viridiplantae</taxon>
        <taxon>Streptophyta</taxon>
        <taxon>Embryophyta</taxon>
        <taxon>Tracheophyta</taxon>
        <taxon>Spermatophyta</taxon>
        <taxon>Magnoliopsida</taxon>
        <taxon>Liliopsida</taxon>
        <taxon>Poales</taxon>
        <taxon>Poaceae</taxon>
        <taxon>BOP clade</taxon>
        <taxon>Oryzoideae</taxon>
        <taxon>Oryzeae</taxon>
        <taxon>Oryzinae</taxon>
        <taxon>Oryza</taxon>
        <taxon>Oryza sativa</taxon>
    </lineage>
</organism>
<reference key="1">
    <citation type="submission" date="2002-10" db="EMBL/GenBank/DDBJ databases">
        <title>Oryza sativa japonica group Jab1 gene for JUN-activation-domain-binding protein 1.</title>
        <authorList>
            <person name="Yamamoto T."/>
            <person name="Mori Y."/>
            <person name="Kimura S."/>
            <person name="Sakaguchi K."/>
        </authorList>
    </citation>
    <scope>NUCLEOTIDE SEQUENCE [GENOMIC DNA]</scope>
    <source>
        <strain>cv. Nipponbare</strain>
    </source>
</reference>
<reference key="2">
    <citation type="journal article" date="2002" name="Nature">
        <title>Sequence and analysis of rice chromosome 4.</title>
        <authorList>
            <person name="Feng Q."/>
            <person name="Zhang Y."/>
            <person name="Hao P."/>
            <person name="Wang S."/>
            <person name="Fu G."/>
            <person name="Huang Y."/>
            <person name="Li Y."/>
            <person name="Zhu J."/>
            <person name="Liu Y."/>
            <person name="Hu X."/>
            <person name="Jia P."/>
            <person name="Zhang Y."/>
            <person name="Zhao Q."/>
            <person name="Ying K."/>
            <person name="Yu S."/>
            <person name="Tang Y."/>
            <person name="Weng Q."/>
            <person name="Zhang L."/>
            <person name="Lu Y."/>
            <person name="Mu J."/>
            <person name="Lu Y."/>
            <person name="Zhang L.S."/>
            <person name="Yu Z."/>
            <person name="Fan D."/>
            <person name="Liu X."/>
            <person name="Lu T."/>
            <person name="Li C."/>
            <person name="Wu Y."/>
            <person name="Sun T."/>
            <person name="Lei H."/>
            <person name="Li T."/>
            <person name="Hu H."/>
            <person name="Guan J."/>
            <person name="Wu M."/>
            <person name="Zhang R."/>
            <person name="Zhou B."/>
            <person name="Chen Z."/>
            <person name="Chen L."/>
            <person name="Jin Z."/>
            <person name="Wang R."/>
            <person name="Yin H."/>
            <person name="Cai Z."/>
            <person name="Ren S."/>
            <person name="Lv G."/>
            <person name="Gu W."/>
            <person name="Zhu G."/>
            <person name="Tu Y."/>
            <person name="Jia J."/>
            <person name="Zhang Y."/>
            <person name="Chen J."/>
            <person name="Kang H."/>
            <person name="Chen X."/>
            <person name="Shao C."/>
            <person name="Sun Y."/>
            <person name="Hu Q."/>
            <person name="Zhang X."/>
            <person name="Zhang W."/>
            <person name="Wang L."/>
            <person name="Ding C."/>
            <person name="Sheng H."/>
            <person name="Gu J."/>
            <person name="Chen S."/>
            <person name="Ni L."/>
            <person name="Zhu F."/>
            <person name="Chen W."/>
            <person name="Lan L."/>
            <person name="Lai Y."/>
            <person name="Cheng Z."/>
            <person name="Gu M."/>
            <person name="Jiang J."/>
            <person name="Li J."/>
            <person name="Hong G."/>
            <person name="Xue Y."/>
            <person name="Han B."/>
        </authorList>
    </citation>
    <scope>NUCLEOTIDE SEQUENCE [LARGE SCALE GENOMIC DNA]</scope>
    <source>
        <strain>cv. Nipponbare</strain>
    </source>
</reference>
<reference key="3">
    <citation type="journal article" date="2005" name="Nature">
        <title>The map-based sequence of the rice genome.</title>
        <authorList>
            <consortium name="International rice genome sequencing project (IRGSP)"/>
        </authorList>
    </citation>
    <scope>NUCLEOTIDE SEQUENCE [LARGE SCALE GENOMIC DNA]</scope>
    <source>
        <strain>cv. Nipponbare</strain>
    </source>
</reference>
<reference key="4">
    <citation type="journal article" date="2008" name="Nucleic Acids Res.">
        <title>The rice annotation project database (RAP-DB): 2008 update.</title>
        <authorList>
            <consortium name="The rice annotation project (RAP)"/>
        </authorList>
    </citation>
    <scope>GENOME REANNOTATION</scope>
    <source>
        <strain>cv. Nipponbare</strain>
    </source>
</reference>
<reference key="5">
    <citation type="journal article" date="2013" name="Rice">
        <title>Improvement of the Oryza sativa Nipponbare reference genome using next generation sequence and optical map data.</title>
        <authorList>
            <person name="Kawahara Y."/>
            <person name="de la Bastide M."/>
            <person name="Hamilton J.P."/>
            <person name="Kanamori H."/>
            <person name="McCombie W.R."/>
            <person name="Ouyang S."/>
            <person name="Schwartz D.C."/>
            <person name="Tanaka T."/>
            <person name="Wu J."/>
            <person name="Zhou S."/>
            <person name="Childs K.L."/>
            <person name="Davidson R.M."/>
            <person name="Lin H."/>
            <person name="Quesada-Ocampo L."/>
            <person name="Vaillancourt B."/>
            <person name="Sakai H."/>
            <person name="Lee S.S."/>
            <person name="Kim J."/>
            <person name="Numa H."/>
            <person name="Itoh T."/>
            <person name="Buell C.R."/>
            <person name="Matsumoto T."/>
        </authorList>
    </citation>
    <scope>GENOME REANNOTATION</scope>
    <source>
        <strain>cv. Nipponbare</strain>
    </source>
</reference>
<reference key="6">
    <citation type="journal article" date="2003" name="Science">
        <title>Collection, mapping, and annotation of over 28,000 cDNA clones from japonica rice.</title>
        <authorList>
            <consortium name="The rice full-length cDNA consortium"/>
        </authorList>
    </citation>
    <scope>NUCLEOTIDE SEQUENCE [LARGE SCALE MRNA]</scope>
    <source>
        <strain>cv. Nipponbare</strain>
    </source>
</reference>
<reference key="7">
    <citation type="journal article" date="2008" name="BMB Rep.">
        <title>Identification and characterization of a rice MCM2 homologue required for DNA replication.</title>
        <authorList>
            <person name="Cho J.H."/>
            <person name="Kim H.B."/>
            <person name="Kim H.S."/>
            <person name="Choi S.B."/>
        </authorList>
    </citation>
    <scope>INTERACTION WITH MCM2</scope>
</reference>
<reference key="8">
    <citation type="journal article" date="2016" name="Sci. Rep.">
        <title>CSN6, a subunit of the COP9 signalosome, is involved in early response to iron deficiency in Oryza sativa.</title>
        <authorList>
            <person name="Tan S."/>
            <person name="Liu F."/>
            <person name="Pan X.X."/>
            <person name="Zang Y.P."/>
            <person name="Jin F."/>
            <person name="Zu W.X."/>
            <person name="Qi X.T."/>
            <person name="Xiao W."/>
            <person name="Yin L.P."/>
        </authorList>
    </citation>
    <scope>FUNCTION</scope>
    <scope>INDUCTION</scope>
</reference>
<accession>Q8H936</accession>
<accession>Q7XTD8</accession>
<feature type="chain" id="PRO_0000446887" description="COP9 signalosome complex subunit 5">
    <location>
        <begin position="1"/>
        <end position="360"/>
    </location>
</feature>
<feature type="domain" description="MPN" evidence="3">
    <location>
        <begin position="60"/>
        <end position="197"/>
    </location>
</feature>
<feature type="region of interest" description="Disordered" evidence="4">
    <location>
        <begin position="293"/>
        <end position="315"/>
    </location>
</feature>
<feature type="region of interest" description="Disordered" evidence="4">
    <location>
        <begin position="341"/>
        <end position="360"/>
    </location>
</feature>
<feature type="short sequence motif" description="JAMM motif" evidence="3">
    <location>
        <begin position="143"/>
        <end position="156"/>
    </location>
</feature>
<feature type="compositionally biased region" description="Polar residues" evidence="4">
    <location>
        <begin position="341"/>
        <end position="350"/>
    </location>
</feature>
<feature type="binding site" evidence="3">
    <location>
        <position position="143"/>
    </location>
    <ligand>
        <name>Zn(2+)</name>
        <dbReference type="ChEBI" id="CHEBI:29105"/>
        <note>catalytic</note>
    </ligand>
</feature>
<feature type="binding site" evidence="3">
    <location>
        <position position="145"/>
    </location>
    <ligand>
        <name>Zn(2+)</name>
        <dbReference type="ChEBI" id="CHEBI:29105"/>
        <note>catalytic</note>
    </ligand>
</feature>
<feature type="binding site" evidence="3">
    <location>
        <position position="156"/>
    </location>
    <ligand>
        <name>Zn(2+)</name>
        <dbReference type="ChEBI" id="CHEBI:29105"/>
        <note>catalytic</note>
    </ligand>
</feature>
<sequence length="360" mass="40037">MEPTSSAAMARQTWELENNIPAAASDPDALDAIYRYDEAAQARVQQEKPWANDPHPFRRAKISALALLKMVVHARAGGTIEVMGLMQGKCEGDAIVVMDAFALPVEGTETRVNAQADAYEYMVEYSTINKQAGRLENVVGWYHSHPGYGCWLSGIDVSTQMLNQQFQEPFLAVVIDPTRTVSAGKVEIGAFRTYPKDYKPPDEPVSEYQTIPLNKIEDFGVHCKQYYALDITYFKSSLDSHLLDLLWNKYWVNTLSSSPLLGNRDYVAGQIFDLADKLEQAEGQLAHSRYGMLMPSQRKKEQEESPLAKVTRDSSKITAEQVHGLMSQVIKDILFNSVHPSNKASTSAPDSSGPEPMVEA</sequence>
<dbReference type="EMBL" id="AB095022">
    <property type="protein sequence ID" value="BAC22747.1"/>
    <property type="molecule type" value="Genomic_DNA"/>
</dbReference>
<dbReference type="EMBL" id="AL606446">
    <property type="protein sequence ID" value="CAE01552.2"/>
    <property type="molecule type" value="Genomic_DNA"/>
</dbReference>
<dbReference type="EMBL" id="AP008210">
    <property type="protein sequence ID" value="BAF16026.1"/>
    <property type="molecule type" value="Genomic_DNA"/>
</dbReference>
<dbReference type="EMBL" id="AP014960">
    <property type="protein sequence ID" value="BAS91398.1"/>
    <property type="molecule type" value="Genomic_DNA"/>
</dbReference>
<dbReference type="PIR" id="T02934">
    <property type="entry name" value="T02934"/>
</dbReference>
<dbReference type="SMR" id="Q8H936"/>
<dbReference type="FunCoup" id="Q8H936">
    <property type="interactions" value="3275"/>
</dbReference>
<dbReference type="STRING" id="39947.Q8H936"/>
<dbReference type="MEROPS" id="M67.A02"/>
<dbReference type="PaxDb" id="39947-Q8H936"/>
<dbReference type="EnsemblPlants" id="Os04t0654700-01">
    <property type="protein sequence ID" value="Os04t0654700-01"/>
    <property type="gene ID" value="Os04g0654700"/>
</dbReference>
<dbReference type="EnsemblPlants" id="Os04t0654700-02">
    <property type="protein sequence ID" value="Os04t0654700-02"/>
    <property type="gene ID" value="Os04g0654700"/>
</dbReference>
<dbReference type="GeneID" id="4337249"/>
<dbReference type="Gramene" id="Os04t0654700-01">
    <property type="protein sequence ID" value="Os04t0654700-01"/>
    <property type="gene ID" value="Os04g0654700"/>
</dbReference>
<dbReference type="Gramene" id="Os04t0654700-02">
    <property type="protein sequence ID" value="Os04t0654700-02"/>
    <property type="gene ID" value="Os04g0654700"/>
</dbReference>
<dbReference type="KEGG" id="dosa:Os04g0654700"/>
<dbReference type="KEGG" id="osa:4337249"/>
<dbReference type="eggNOG" id="KOG1554">
    <property type="taxonomic scope" value="Eukaryota"/>
</dbReference>
<dbReference type="HOGENOM" id="CLU_053034_0_2_1"/>
<dbReference type="InParanoid" id="Q8H936"/>
<dbReference type="OMA" id="VKMKLFQ"/>
<dbReference type="OrthoDB" id="10266268at2759"/>
<dbReference type="Proteomes" id="UP000000763">
    <property type="component" value="Chromosome 4"/>
</dbReference>
<dbReference type="Proteomes" id="UP000059680">
    <property type="component" value="Chromosome 4"/>
</dbReference>
<dbReference type="GO" id="GO:0008180">
    <property type="term" value="C:COP9 signalosome"/>
    <property type="evidence" value="ECO:0000318"/>
    <property type="project" value="GO_Central"/>
</dbReference>
<dbReference type="GO" id="GO:0005737">
    <property type="term" value="C:cytoplasm"/>
    <property type="evidence" value="ECO:0000318"/>
    <property type="project" value="GO_Central"/>
</dbReference>
<dbReference type="GO" id="GO:0019784">
    <property type="term" value="F:deNEDDylase activity"/>
    <property type="evidence" value="ECO:0000318"/>
    <property type="project" value="GO_Central"/>
</dbReference>
<dbReference type="GO" id="GO:0046872">
    <property type="term" value="F:metal ion binding"/>
    <property type="evidence" value="ECO:0007669"/>
    <property type="project" value="UniProtKB-KW"/>
</dbReference>
<dbReference type="GO" id="GO:0008237">
    <property type="term" value="F:metallopeptidase activity"/>
    <property type="evidence" value="ECO:0000318"/>
    <property type="project" value="GO_Central"/>
</dbReference>
<dbReference type="GO" id="GO:0006508">
    <property type="term" value="P:proteolysis"/>
    <property type="evidence" value="ECO:0007669"/>
    <property type="project" value="UniProtKB-KW"/>
</dbReference>
<dbReference type="GO" id="GO:0051726">
    <property type="term" value="P:regulation of cell cycle"/>
    <property type="evidence" value="ECO:0000318"/>
    <property type="project" value="GO_Central"/>
</dbReference>
<dbReference type="GO" id="GO:1990641">
    <property type="term" value="P:response to iron ion starvation"/>
    <property type="evidence" value="ECO:0000314"/>
    <property type="project" value="UniProtKB"/>
</dbReference>
<dbReference type="CDD" id="cd08069">
    <property type="entry name" value="MPN_RPN11_CSN5"/>
    <property type="match status" value="1"/>
</dbReference>
<dbReference type="FunFam" id="3.40.140.10:FF:000003">
    <property type="entry name" value="COP9 signalosome complex subunit 5"/>
    <property type="match status" value="1"/>
</dbReference>
<dbReference type="Gene3D" id="3.40.140.10">
    <property type="entry name" value="Cytidine Deaminase, domain 2"/>
    <property type="match status" value="1"/>
</dbReference>
<dbReference type="InterPro" id="IPR040961">
    <property type="entry name" value="CSN5_C"/>
</dbReference>
<dbReference type="InterPro" id="IPR000555">
    <property type="entry name" value="JAMM/MPN+_dom"/>
</dbReference>
<dbReference type="InterPro" id="IPR050242">
    <property type="entry name" value="JAMM_MPN+_peptidase_M67A"/>
</dbReference>
<dbReference type="InterPro" id="IPR037518">
    <property type="entry name" value="MPN"/>
</dbReference>
<dbReference type="PANTHER" id="PTHR10410">
    <property type="entry name" value="EUKARYOTIC TRANSLATION INITIATION FACTOR 3 -RELATED"/>
    <property type="match status" value="1"/>
</dbReference>
<dbReference type="Pfam" id="PF18323">
    <property type="entry name" value="CSN5_C"/>
    <property type="match status" value="1"/>
</dbReference>
<dbReference type="Pfam" id="PF01398">
    <property type="entry name" value="JAB"/>
    <property type="match status" value="1"/>
</dbReference>
<dbReference type="SMART" id="SM00232">
    <property type="entry name" value="JAB_MPN"/>
    <property type="match status" value="1"/>
</dbReference>
<dbReference type="SUPFAM" id="SSF102712">
    <property type="entry name" value="JAB1/MPN domain"/>
    <property type="match status" value="1"/>
</dbReference>
<dbReference type="PROSITE" id="PS50249">
    <property type="entry name" value="MPN"/>
    <property type="match status" value="1"/>
</dbReference>
<proteinExistence type="evidence at protein level"/>